<dbReference type="SMR" id="P83652"/>
<dbReference type="GO" id="GO:0005576">
    <property type="term" value="C:extracellular region"/>
    <property type="evidence" value="ECO:0007669"/>
    <property type="project" value="UniProtKB-SubCell"/>
</dbReference>
<dbReference type="GO" id="GO:0050832">
    <property type="term" value="P:defense response to fungus"/>
    <property type="evidence" value="ECO:0007669"/>
    <property type="project" value="UniProtKB-KW"/>
</dbReference>
<dbReference type="GO" id="GO:0031640">
    <property type="term" value="P:killing of cells of another organism"/>
    <property type="evidence" value="ECO:0007669"/>
    <property type="project" value="UniProtKB-KW"/>
</dbReference>
<dbReference type="InterPro" id="IPR013006">
    <property type="entry name" value="Antimicrobial_C6_CS"/>
</dbReference>
<dbReference type="InterPro" id="IPR009101">
    <property type="entry name" value="Gurmarin/antifun_pep"/>
</dbReference>
<dbReference type="InterPro" id="IPR024206">
    <property type="entry name" value="Gurmarin/antimicrobial_peptd"/>
</dbReference>
<dbReference type="Pfam" id="PF11410">
    <property type="entry name" value="Antifungal_pept"/>
    <property type="match status" value="1"/>
</dbReference>
<dbReference type="SUPFAM" id="SSF57048">
    <property type="entry name" value="Gurmarin-like"/>
    <property type="match status" value="1"/>
</dbReference>
<dbReference type="PROSITE" id="PS60011">
    <property type="entry name" value="PLANT_C6_AMP"/>
    <property type="match status" value="1"/>
</dbReference>
<sequence length="34" mass="3635">CIANRNGCQPDGSQGNCCSGYCHKEPGWVAGYCR</sequence>
<feature type="peptide" id="PRO_0000045065" description="Antimicrobial peptide Alo-2">
    <location>
        <begin position="1"/>
        <end position="34"/>
    </location>
</feature>
<feature type="disulfide bond" evidence="1">
    <location>
        <begin position="1"/>
        <end position="18"/>
    </location>
</feature>
<feature type="disulfide bond" evidence="1">
    <location>
        <begin position="8"/>
        <end position="22"/>
    </location>
</feature>
<feature type="disulfide bond" evidence="1">
    <location>
        <begin position="17"/>
        <end position="33"/>
    </location>
</feature>
<accession>P83652</accession>
<name>ALO2_ACRLO</name>
<proteinExistence type="evidence at protein level"/>
<comment type="function">
    <text evidence="2 3">Has antifungal activity against C.glabrata.</text>
</comment>
<comment type="subcellular location">
    <subcellularLocation>
        <location>Secreted</location>
    </subcellularLocation>
</comment>
<comment type="domain">
    <text evidence="1">The presence of a 'disulfide through disulfide knot' structurally defines this protein as a knottin.</text>
</comment>
<comment type="mass spectrometry" mass="3629.1" method="MALDI" evidence="2"/>
<comment type="similarity">
    <text evidence="3">Belongs to the AMP family.</text>
</comment>
<keyword id="KW-0929">Antimicrobial</keyword>
<keyword id="KW-0903">Direct protein sequencing</keyword>
<keyword id="KW-1015">Disulfide bond</keyword>
<keyword id="KW-0295">Fungicide</keyword>
<keyword id="KW-0960">Knottin</keyword>
<keyword id="KW-0964">Secreted</keyword>
<protein>
    <recommendedName>
        <fullName>Antimicrobial peptide Alo-2</fullName>
    </recommendedName>
</protein>
<organism evidence="3">
    <name type="scientific">Acrocinus longimanus</name>
    <name type="common">Giant harlequin beetle</name>
    <dbReference type="NCBI Taxonomy" id="227548"/>
    <lineage>
        <taxon>Eukaryota</taxon>
        <taxon>Metazoa</taxon>
        <taxon>Ecdysozoa</taxon>
        <taxon>Arthropoda</taxon>
        <taxon>Hexapoda</taxon>
        <taxon>Insecta</taxon>
        <taxon>Pterygota</taxon>
        <taxon>Neoptera</taxon>
        <taxon>Endopterygota</taxon>
        <taxon>Coleoptera</taxon>
        <taxon>Polyphaga</taxon>
        <taxon>Cucujiformia</taxon>
        <taxon>Chrysomeloidea</taxon>
        <taxon>Cerambycidae</taxon>
        <taxon>Lamiinae</taxon>
        <taxon>Acrocinini</taxon>
        <taxon>Acrocinus</taxon>
    </lineage>
</organism>
<reference key="1">
    <citation type="journal article" date="2003" name="Biochemistry">
        <title>Solution structure of Alo-3: a new knottin-type antifungal peptide from the insect Acrocinus longimanus.</title>
        <authorList>
            <person name="Barbault F."/>
            <person name="Landon C."/>
            <person name="Guenneugues M."/>
            <person name="Meyer J.-P."/>
            <person name="Schott V."/>
            <person name="Dimarcq J.-L."/>
            <person name="Vovelle F."/>
        </authorList>
    </citation>
    <scope>PROTEIN SEQUENCE</scope>
    <scope>FUNCTION</scope>
    <scope>MASS SPECTROMETRY</scope>
    <source>
        <tissue>Hemolymph</tissue>
    </source>
</reference>
<evidence type="ECO:0000250" key="1"/>
<evidence type="ECO:0000269" key="2">
    <source>
    </source>
</evidence>
<evidence type="ECO:0000305" key="3"/>